<proteinExistence type="predicted"/>
<comment type="function">
    <molecule>Serine protease</molecule>
    <text>Responsible for cleavages of polyprotein P2A and replicase polyprotein P2AB.</text>
</comment>
<comment type="function">
    <molecule>VPg</molecule>
    <text>Covalently attached to the 5' extremity of the genomic and subgenomic RNAs. It may serve as a primer for the replicase.</text>
</comment>
<comment type="subcellular location">
    <molecule>Polyprotein P2A</molecule>
    <subcellularLocation>
        <location evidence="5">Host membrane</location>
        <topology evidence="5">Multi-pass membrane protein</topology>
    </subcellularLocation>
</comment>
<comment type="subcellular location">
    <molecule>N-terminal protein</molecule>
    <subcellularLocation>
        <location evidence="5">Host membrane</location>
        <topology evidence="5">Multi-pass membrane protein</topology>
    </subcellularLocation>
</comment>
<comment type="alternative products">
    <event type="ribosomal frameshifting"/>
    <isoform>
        <id>O73564-1</id>
        <name>Polyprotein P2A</name>
        <sequence type="displayed"/>
    </isoform>
    <isoform>
        <id>O72157-1</id>
        <name>Replicase polyprotein P2AB</name>
        <sequence type="external"/>
    </isoform>
</comment>
<comment type="PTM">
    <text evidence="5">The polyprotein is proteolytically cleaved into several chains by the viral protease.</text>
</comment>
<comment type="miscellaneous">
    <molecule>Isoform Polyprotein P2A</molecule>
    <text>Produced by conventional translation.</text>
</comment>
<comment type="sequence caution" evidence="5">
    <conflict type="erroneous gene model prediction">
        <sequence resource="EMBL-CDS" id="AAC15984"/>
    </conflict>
</comment>
<comment type="sequence caution" evidence="5">
    <conflict type="erroneous gene model prediction">
        <sequence resource="EMBL-CDS" id="AAC15988"/>
    </conflict>
</comment>
<feature type="chain" id="PRO_0000402469" description="Polyprotein P2A">
    <location>
        <begin position="1"/>
        <end position="575"/>
    </location>
</feature>
<feature type="chain" id="PRO_0000409838" description="N-terminal protein" evidence="2">
    <location>
        <begin position="1"/>
        <end position="132"/>
    </location>
</feature>
<feature type="chain" id="PRO_0000409839" description="Serine protease" evidence="2">
    <location>
        <begin position="133"/>
        <end position="325"/>
    </location>
</feature>
<feature type="chain" id="PRO_0000409840" description="VPg" evidence="2">
    <location>
        <begin position="326"/>
        <end position="402"/>
    </location>
</feature>
<feature type="chain" id="PRO_0000409841" description="Putative protein p10" evidence="1">
    <location>
        <begin position="403"/>
        <end position="497"/>
    </location>
</feature>
<feature type="chain" id="PRO_0000409842" description="Putative protein p8" evidence="1">
    <location>
        <begin position="498"/>
        <end position="575"/>
    </location>
</feature>
<feature type="transmembrane region" description="Helical" evidence="2">
    <location>
        <begin position="10"/>
        <end position="30"/>
    </location>
</feature>
<feature type="transmembrane region" description="Helical" evidence="2">
    <location>
        <begin position="36"/>
        <end position="56"/>
    </location>
</feature>
<feature type="transmembrane region" description="Helical" evidence="2">
    <location>
        <begin position="74"/>
        <end position="96"/>
    </location>
</feature>
<feature type="domain" description="Peptidase S39" evidence="3">
    <location>
        <begin position="135"/>
        <end position="335"/>
    </location>
</feature>
<feature type="region of interest" description="Disordered" evidence="4">
    <location>
        <begin position="513"/>
        <end position="575"/>
    </location>
</feature>
<feature type="compositionally biased region" description="Basic residues" evidence="4">
    <location>
        <begin position="541"/>
        <end position="553"/>
    </location>
</feature>
<feature type="compositionally biased region" description="Polar residues" evidence="4">
    <location>
        <begin position="558"/>
        <end position="575"/>
    </location>
</feature>
<feature type="active site" description="For protease activity" evidence="3">
    <location>
        <position position="181"/>
    </location>
</feature>
<feature type="active site" description="For protease activity" evidence="3">
    <location>
        <position position="216"/>
    </location>
</feature>
<feature type="active site" description="For protease activity" evidence="3">
    <location>
        <position position="284"/>
    </location>
</feature>
<feature type="site" description="Cleavage; by viral serine protease" evidence="2">
    <location>
        <begin position="132"/>
        <end position="133"/>
    </location>
</feature>
<feature type="site" description="Cleavage; by viral serine protease" evidence="2">
    <location>
        <begin position="325"/>
        <end position="326"/>
    </location>
</feature>
<feature type="site" description="Cleavage; by viral serine protease" evidence="2">
    <location>
        <begin position="402"/>
        <end position="403"/>
    </location>
</feature>
<feature type="site" description="Cleavage; by viral serine protease" evidence="2">
    <location>
        <begin position="497"/>
        <end position="498"/>
    </location>
</feature>
<dbReference type="EC" id="3.4.21.-"/>
<dbReference type="EMBL" id="AF055887">
    <property type="protein sequence ID" value="AAC15984.1"/>
    <property type="status" value="ALT_SEQ"/>
    <property type="molecule type" value="Genomic_RNA"/>
</dbReference>
<dbReference type="EMBL" id="AF055888">
    <property type="protein sequence ID" value="AAC15988.1"/>
    <property type="status" value="ALT_SEQ"/>
    <property type="molecule type" value="Genomic_RNA"/>
</dbReference>
<dbReference type="SMR" id="O73564"/>
<dbReference type="Proteomes" id="UP000001671">
    <property type="component" value="Segment"/>
</dbReference>
<dbReference type="GO" id="GO:0033644">
    <property type="term" value="C:host cell membrane"/>
    <property type="evidence" value="ECO:0007669"/>
    <property type="project" value="UniProtKB-SubCell"/>
</dbReference>
<dbReference type="GO" id="GO:0016020">
    <property type="term" value="C:membrane"/>
    <property type="evidence" value="ECO:0007669"/>
    <property type="project" value="UniProtKB-KW"/>
</dbReference>
<dbReference type="GO" id="GO:0004252">
    <property type="term" value="F:serine-type endopeptidase activity"/>
    <property type="evidence" value="ECO:0007669"/>
    <property type="project" value="InterPro"/>
</dbReference>
<dbReference type="GO" id="GO:0016740">
    <property type="term" value="F:transferase activity"/>
    <property type="evidence" value="ECO:0007669"/>
    <property type="project" value="UniProtKB-KW"/>
</dbReference>
<dbReference type="GO" id="GO:0006508">
    <property type="term" value="P:proteolysis"/>
    <property type="evidence" value="ECO:0007669"/>
    <property type="project" value="UniProtKB-KW"/>
</dbReference>
<dbReference type="GO" id="GO:0075523">
    <property type="term" value="P:viral translational frameshifting"/>
    <property type="evidence" value="ECO:0007669"/>
    <property type="project" value="UniProtKB-KW"/>
</dbReference>
<dbReference type="Gene3D" id="2.40.10.10">
    <property type="entry name" value="Trypsin-like serine proteases"/>
    <property type="match status" value="2"/>
</dbReference>
<dbReference type="InterPro" id="IPR009003">
    <property type="entry name" value="Peptidase_S1_PA"/>
</dbReference>
<dbReference type="InterPro" id="IPR043504">
    <property type="entry name" value="Peptidase_S1_PA_chymotrypsin"/>
</dbReference>
<dbReference type="InterPro" id="IPR000382">
    <property type="entry name" value="Peptidase_S39B_luteovirus"/>
</dbReference>
<dbReference type="Pfam" id="PF02122">
    <property type="entry name" value="Peptidase_S39"/>
    <property type="match status" value="2"/>
</dbReference>
<dbReference type="SUPFAM" id="SSF50494">
    <property type="entry name" value="Trypsin-like serine proteases"/>
    <property type="match status" value="1"/>
</dbReference>
<dbReference type="PROSITE" id="PS51868">
    <property type="entry name" value="PEPTIDASE_S39"/>
    <property type="match status" value="1"/>
</dbReference>
<reference key="1">
    <citation type="journal article" date="1998" name="Arch. Virol.">
        <title>Nucleotide sequence of a resistance breaking mutant of southern bean mosaic virus.</title>
        <authorList>
            <person name="Lee L."/>
            <person name="Anderson E.J."/>
        </authorList>
    </citation>
    <scope>NUCLEOTIDE SEQUENCE [GENOMIC RNA]</scope>
    <source>
        <strain>SBMV-B</strain>
        <strain>SBMV-S</strain>
    </source>
</reference>
<reference key="2">
    <citation type="journal article" date="2007" name="Arch. Virol.">
        <title>Sobemoviruses possess a common CfMV-like genomic organization.</title>
        <authorList>
            <person name="Meier M."/>
            <person name="Truve E."/>
        </authorList>
    </citation>
    <scope>SEQUENCE REVISION TO 557</scope>
    <scope>GENOME REANNOTATION</scope>
    <scope>RIBOSOMAL FRAMESHIFT</scope>
</reference>
<sequence length="575" mass="62722">MYHPGRSPSFLITLANVICAAILFDIHTGGYQPGSLIPIVAWMTPFVTLLWLSASFATYLYKYVRTRLLPEEKVARVYYTAQSAPYFDPALGVMMQFAPSHGGASIEVQVNPSWISLLGGSLKINGDDASNESAVLGSFYSSVKPGDEPASLVAIKSGPQTIGFGCRTKIDGDDCLFTANHVWNNSMRPTALAKRGKQVAIEDWETPLSCDHKMLDFVVVRVPKHVWSKLGVKATQLVCPSDKDAVTCYGGSSSDNLLSGTGVCSKVDFSWKLTHSCPTAAGWSGTPIYSSRGVVGMHVGFEDIGKLNRGVNAFYVSNYLLRSQETLPPELSVIEIPFEDVETRSYEFIEVEIKGRGKAKLGKREFAWIPESGKYWADDDDDSLPPPPKVVDGKMVWSSAQETVAEPLNYQRAAGSRPLPPFLNLQATTSKKEKQPLQEECPLDLLGSRLASLESCVEKILQMKSLELLGSSQNCQTSPGPSEAPKQSFTPCYSKQESLIPLESQGILKELVKTSLSATPPPNPVTVSVEKPGPSTQSTKKSARRRNRRKSTRKPVQESPSPASPQPTKTSLRGI</sequence>
<keyword id="KW-0191">Covalent protein-RNA linkage</keyword>
<keyword id="KW-1043">Host membrane</keyword>
<keyword id="KW-0378">Hydrolase</keyword>
<keyword id="KW-0472">Membrane</keyword>
<keyword id="KW-0645">Protease</keyword>
<keyword id="KW-1185">Reference proteome</keyword>
<keyword id="KW-0688">Ribosomal frameshifting</keyword>
<keyword id="KW-0720">Serine protease</keyword>
<keyword id="KW-0808">Transferase</keyword>
<keyword id="KW-0812">Transmembrane</keyword>
<keyword id="KW-1133">Transmembrane helix</keyword>
<name>P2A_SBMVA</name>
<protein>
    <recommendedName>
        <fullName>Polyprotein P2A</fullName>
    </recommendedName>
    <component>
        <recommendedName>
            <fullName>N-terminal protein</fullName>
        </recommendedName>
    </component>
    <component>
        <recommendedName>
            <fullName>Serine protease</fullName>
            <ecNumber>3.4.21.-</ecNumber>
        </recommendedName>
    </component>
    <component>
        <recommendedName>
            <fullName>VPg</fullName>
        </recommendedName>
    </component>
    <component>
        <recommendedName>
            <fullName>Putative protein p10</fullName>
        </recommendedName>
    </component>
    <component>
        <recommendedName>
            <fullName>Putative protein p8</fullName>
        </recommendedName>
    </component>
</protein>
<evidence type="ECO:0000250" key="1"/>
<evidence type="ECO:0000255" key="2"/>
<evidence type="ECO:0000255" key="3">
    <source>
        <dbReference type="PROSITE-ProRule" id="PRU01216"/>
    </source>
</evidence>
<evidence type="ECO:0000256" key="4">
    <source>
        <dbReference type="SAM" id="MobiDB-lite"/>
    </source>
</evidence>
<evidence type="ECO:0000305" key="5"/>
<organism>
    <name type="scientific">Southern bean mosaic virus (isolate Bean/United States/Arkansas)</name>
    <name type="common">SBMV</name>
    <dbReference type="NCBI Taxonomy" id="652938"/>
    <lineage>
        <taxon>Viruses</taxon>
        <taxon>Riboviria</taxon>
        <taxon>Orthornavirae</taxon>
        <taxon>Pisuviricota</taxon>
        <taxon>Pisoniviricetes</taxon>
        <taxon>Sobelivirales</taxon>
        <taxon>Solemoviridae</taxon>
        <taxon>Sobemovirus</taxon>
        <taxon>Southern bean mosaic virus</taxon>
    </lineage>
</organism>
<gene>
    <name type="ORF">ORF2A</name>
</gene>
<accession>O73564</accession>
<organismHost>
    <name type="scientific">Glycine max</name>
    <name type="common">Soybean</name>
    <name type="synonym">Glycine hispida</name>
    <dbReference type="NCBI Taxonomy" id="3847"/>
</organismHost>
<organismHost>
    <name type="scientific">Phaseolus vulgaris</name>
    <name type="common">Kidney bean</name>
    <name type="synonym">French bean</name>
    <dbReference type="NCBI Taxonomy" id="3885"/>
</organismHost>
<organismHost>
    <name type="scientific">Vigna mungo</name>
    <name type="common">Black gram</name>
    <name type="synonym">Phaseolus mungo</name>
    <dbReference type="NCBI Taxonomy" id="3915"/>
</organismHost>
<organismHost>
    <name type="scientific">Vigna unguiculata</name>
    <name type="common">Cowpea</name>
    <dbReference type="NCBI Taxonomy" id="3917"/>
</organismHost>